<evidence type="ECO:0000255" key="1">
    <source>
        <dbReference type="HAMAP-Rule" id="MF_01104"/>
    </source>
</evidence>
<accession>B8E7T6</accession>
<reference key="1">
    <citation type="submission" date="2008-12" db="EMBL/GenBank/DDBJ databases">
        <title>Complete sequence of chromosome of Shewanella baltica OS223.</title>
        <authorList>
            <consortium name="US DOE Joint Genome Institute"/>
            <person name="Lucas S."/>
            <person name="Copeland A."/>
            <person name="Lapidus A."/>
            <person name="Glavina del Rio T."/>
            <person name="Dalin E."/>
            <person name="Tice H."/>
            <person name="Bruce D."/>
            <person name="Goodwin L."/>
            <person name="Pitluck S."/>
            <person name="Chertkov O."/>
            <person name="Meincke L."/>
            <person name="Brettin T."/>
            <person name="Detter J.C."/>
            <person name="Han C."/>
            <person name="Kuske C.R."/>
            <person name="Larimer F."/>
            <person name="Land M."/>
            <person name="Hauser L."/>
            <person name="Kyrpides N."/>
            <person name="Ovchinnikova G."/>
            <person name="Brettar I."/>
            <person name="Rodrigues J."/>
            <person name="Konstantinidis K."/>
            <person name="Tiedje J."/>
        </authorList>
    </citation>
    <scope>NUCLEOTIDE SEQUENCE [LARGE SCALE GENOMIC DNA]</scope>
    <source>
        <strain>OS223</strain>
    </source>
</reference>
<keyword id="KW-0997">Cell inner membrane</keyword>
<keyword id="KW-1003">Cell membrane</keyword>
<keyword id="KW-0472">Membrane</keyword>
<feature type="chain" id="PRO_1000163948" description="Protein Syd">
    <location>
        <begin position="1"/>
        <end position="216"/>
    </location>
</feature>
<proteinExistence type="inferred from homology"/>
<dbReference type="EMBL" id="CP001252">
    <property type="protein sequence ID" value="ACK47408.1"/>
    <property type="molecule type" value="Genomic_DNA"/>
</dbReference>
<dbReference type="RefSeq" id="WP_012588141.1">
    <property type="nucleotide sequence ID" value="NC_011663.1"/>
</dbReference>
<dbReference type="SMR" id="B8E7T6"/>
<dbReference type="KEGG" id="sbp:Sbal223_2922"/>
<dbReference type="HOGENOM" id="CLU_121866_0_0_6"/>
<dbReference type="Proteomes" id="UP000002507">
    <property type="component" value="Chromosome"/>
</dbReference>
<dbReference type="GO" id="GO:0009898">
    <property type="term" value="C:cytoplasmic side of plasma membrane"/>
    <property type="evidence" value="ECO:0007669"/>
    <property type="project" value="InterPro"/>
</dbReference>
<dbReference type="CDD" id="cd16323">
    <property type="entry name" value="Syd"/>
    <property type="match status" value="1"/>
</dbReference>
<dbReference type="Gene3D" id="3.40.1580.20">
    <property type="entry name" value="Syd protein"/>
    <property type="match status" value="1"/>
</dbReference>
<dbReference type="HAMAP" id="MF_01104">
    <property type="entry name" value="Syd"/>
    <property type="match status" value="1"/>
</dbReference>
<dbReference type="InterPro" id="IPR009948">
    <property type="entry name" value="Syd"/>
</dbReference>
<dbReference type="InterPro" id="IPR038228">
    <property type="entry name" value="Syd_sf"/>
</dbReference>
<dbReference type="NCBIfam" id="NF003439">
    <property type="entry name" value="PRK04968.1"/>
    <property type="match status" value="1"/>
</dbReference>
<dbReference type="Pfam" id="PF07348">
    <property type="entry name" value="Syd"/>
    <property type="match status" value="1"/>
</dbReference>
<gene>
    <name evidence="1" type="primary">syd</name>
    <name type="ordered locus">Sbal223_2922</name>
</gene>
<organism>
    <name type="scientific">Shewanella baltica (strain OS223)</name>
    <dbReference type="NCBI Taxonomy" id="407976"/>
    <lineage>
        <taxon>Bacteria</taxon>
        <taxon>Pseudomonadati</taxon>
        <taxon>Pseudomonadota</taxon>
        <taxon>Gammaproteobacteria</taxon>
        <taxon>Alteromonadales</taxon>
        <taxon>Shewanellaceae</taxon>
        <taxon>Shewanella</taxon>
    </lineage>
</organism>
<comment type="function">
    <text evidence="1">Interacts with the SecY protein in vivo. May bind preferentially to an uncomplexed state of SecY, thus functioning either as a chelating agent for excess SecY in the cell or as a regulatory factor that negatively controls the translocase function.</text>
</comment>
<comment type="subcellular location">
    <subcellularLocation>
        <location evidence="1">Cell inner membrane</location>
        <topology evidence="1">Peripheral membrane protein</topology>
        <orientation evidence="1">Cytoplasmic side</orientation>
    </subcellularLocation>
    <text evidence="1">Loosely associated with the cytoplasmic side of the inner membrane, probably via SecY.</text>
</comment>
<comment type="similarity">
    <text evidence="1">Belongs to the Syd family.</text>
</comment>
<sequence length="216" mass="24616">MSCLPALDKFLQNYHQAYLTSLGELPRYYPQGEASVCIQGEFHADLDQAVSWQPVKREVEGSFANVEHALELTLWPEINHFYGQYFSAPLLFDSEWGTGELLQVWNEDDFTCLQQNLIGHLMMKKKLKQPPTWFIGLLDEGDKMLTINNSDGSVWIELPGEIPTQQLSPSLAEFIGALSPRIAPPVKHEELPMPALEHPGIFASFKRMWQNLFGKR</sequence>
<name>SYDP_SHEB2</name>
<protein>
    <recommendedName>
        <fullName evidence="1">Protein Syd</fullName>
    </recommendedName>
</protein>